<protein>
    <recommendedName>
        <fullName>Transcription activator of gluconeogenesis ERT1</fullName>
    </recommendedName>
</protein>
<evidence type="ECO:0000250" key="1"/>
<evidence type="ECO:0000255" key="2">
    <source>
        <dbReference type="PROSITE-ProRule" id="PRU00140"/>
    </source>
</evidence>
<evidence type="ECO:0000255" key="3">
    <source>
        <dbReference type="PROSITE-ProRule" id="PRU00227"/>
    </source>
</evidence>
<evidence type="ECO:0000256" key="4">
    <source>
        <dbReference type="SAM" id="MobiDB-lite"/>
    </source>
</evidence>
<evidence type="ECO:0000305" key="5"/>
<comment type="function">
    <text evidence="1">Transcription factor which regulates nonfermentable carbon utilization. Activator of gluconeogenetic genes (By similarity).</text>
</comment>
<comment type="subcellular location">
    <subcellularLocation>
        <location evidence="3">Nucleus</location>
    </subcellularLocation>
</comment>
<comment type="similarity">
    <text evidence="5">Belongs to the ERT1/acuK family.</text>
</comment>
<feature type="chain" id="PRO_0000406459" description="Transcription activator of gluconeogenesis ERT1">
    <location>
        <begin position="1"/>
        <end position="596"/>
    </location>
</feature>
<feature type="domain" description="PAS" evidence="2">
    <location>
        <begin position="476"/>
        <end position="548"/>
    </location>
</feature>
<feature type="DNA-binding region" description="Zn(2)-C6 fungal-type" evidence="3">
    <location>
        <begin position="68"/>
        <end position="96"/>
    </location>
</feature>
<feature type="region of interest" description="Disordered" evidence="4">
    <location>
        <begin position="1"/>
        <end position="59"/>
    </location>
</feature>
<feature type="region of interest" description="Disordered" evidence="4">
    <location>
        <begin position="209"/>
        <end position="260"/>
    </location>
</feature>
<feature type="compositionally biased region" description="Polar residues" evidence="4">
    <location>
        <begin position="1"/>
        <end position="42"/>
    </location>
</feature>
<feature type="compositionally biased region" description="Low complexity" evidence="4">
    <location>
        <begin position="43"/>
        <end position="55"/>
    </location>
</feature>
<feature type="compositionally biased region" description="Low complexity" evidence="4">
    <location>
        <begin position="224"/>
        <end position="243"/>
    </location>
</feature>
<feature type="compositionally biased region" description="Polar residues" evidence="4">
    <location>
        <begin position="244"/>
        <end position="260"/>
    </location>
</feature>
<name>ERT1_CANGA</name>
<accession>Q6FML7</accession>
<proteinExistence type="inferred from homology"/>
<dbReference type="EMBL" id="CR380957">
    <property type="protein sequence ID" value="CAG61488.1"/>
    <property type="molecule type" value="Genomic_DNA"/>
</dbReference>
<dbReference type="RefSeq" id="XP_448527.1">
    <property type="nucleotide sequence ID" value="XM_448527.1"/>
</dbReference>
<dbReference type="SMR" id="Q6FML7"/>
<dbReference type="FunCoup" id="Q6FML7">
    <property type="interactions" value="290"/>
</dbReference>
<dbReference type="EnsemblFungi" id="CAGL0K06985g-T">
    <property type="protein sequence ID" value="CAGL0K06985g-T-p1"/>
    <property type="gene ID" value="CAGL0K06985g"/>
</dbReference>
<dbReference type="KEGG" id="cgr:2890386"/>
<dbReference type="CGD" id="CAL0133843">
    <property type="gene designation" value="CAGL0K06985g"/>
</dbReference>
<dbReference type="VEuPathDB" id="FungiDB:CAGL0K06985g"/>
<dbReference type="eggNOG" id="ENOG502R1M5">
    <property type="taxonomic scope" value="Eukaryota"/>
</dbReference>
<dbReference type="HOGENOM" id="CLU_010748_2_3_1"/>
<dbReference type="InParanoid" id="Q6FML7"/>
<dbReference type="OMA" id="VMTTCKL"/>
<dbReference type="Proteomes" id="UP000002428">
    <property type="component" value="Chromosome K"/>
</dbReference>
<dbReference type="GO" id="GO:0005634">
    <property type="term" value="C:nucleus"/>
    <property type="evidence" value="ECO:0007669"/>
    <property type="project" value="UniProtKB-SubCell"/>
</dbReference>
<dbReference type="GO" id="GO:0001227">
    <property type="term" value="F:DNA-binding transcription repressor activity, RNA polymerase II-specific"/>
    <property type="evidence" value="ECO:0007669"/>
    <property type="project" value="EnsemblFungi"/>
</dbReference>
<dbReference type="GO" id="GO:0000977">
    <property type="term" value="F:RNA polymerase II transcription regulatory region sequence-specific DNA binding"/>
    <property type="evidence" value="ECO:0007669"/>
    <property type="project" value="TreeGrafter"/>
</dbReference>
<dbReference type="GO" id="GO:0008270">
    <property type="term" value="F:zinc ion binding"/>
    <property type="evidence" value="ECO:0007669"/>
    <property type="project" value="InterPro"/>
</dbReference>
<dbReference type="GO" id="GO:0045991">
    <property type="term" value="P:carbon catabolite activation of transcription"/>
    <property type="evidence" value="ECO:0007669"/>
    <property type="project" value="EnsemblFungi"/>
</dbReference>
<dbReference type="GO" id="GO:0045013">
    <property type="term" value="P:carbon catabolite repression of transcription"/>
    <property type="evidence" value="ECO:0007669"/>
    <property type="project" value="EnsemblFungi"/>
</dbReference>
<dbReference type="GO" id="GO:0009267">
    <property type="term" value="P:cellular response to starvation"/>
    <property type="evidence" value="ECO:0007669"/>
    <property type="project" value="TreeGrafter"/>
</dbReference>
<dbReference type="GO" id="GO:0006094">
    <property type="term" value="P:gluconeogenesis"/>
    <property type="evidence" value="ECO:0007669"/>
    <property type="project" value="UniProtKB-KW"/>
</dbReference>
<dbReference type="GO" id="GO:0045722">
    <property type="term" value="P:positive regulation of gluconeogenesis"/>
    <property type="evidence" value="ECO:0007669"/>
    <property type="project" value="EnsemblFungi"/>
</dbReference>
<dbReference type="GO" id="GO:0045944">
    <property type="term" value="P:positive regulation of transcription by RNA polymerase II"/>
    <property type="evidence" value="ECO:0007669"/>
    <property type="project" value="EnsemblFungi"/>
</dbReference>
<dbReference type="CDD" id="cd00067">
    <property type="entry name" value="GAL4"/>
    <property type="match status" value="1"/>
</dbReference>
<dbReference type="CDD" id="cd00130">
    <property type="entry name" value="PAS"/>
    <property type="match status" value="1"/>
</dbReference>
<dbReference type="Gene3D" id="3.30.450.20">
    <property type="entry name" value="PAS domain"/>
    <property type="match status" value="1"/>
</dbReference>
<dbReference type="InterPro" id="IPR050335">
    <property type="entry name" value="ERT1_acuK_gluconeogen_tf"/>
</dbReference>
<dbReference type="InterPro" id="IPR000014">
    <property type="entry name" value="PAS"/>
</dbReference>
<dbReference type="InterPro" id="IPR035965">
    <property type="entry name" value="PAS-like_dom_sf"/>
</dbReference>
<dbReference type="InterPro" id="IPR056751">
    <property type="entry name" value="PAS_13"/>
</dbReference>
<dbReference type="InterPro" id="IPR036864">
    <property type="entry name" value="Zn2-C6_fun-type_DNA-bd_sf"/>
</dbReference>
<dbReference type="InterPro" id="IPR001138">
    <property type="entry name" value="Zn2Cys6_DnaBD"/>
</dbReference>
<dbReference type="NCBIfam" id="TIGR00229">
    <property type="entry name" value="sensory_box"/>
    <property type="match status" value="1"/>
</dbReference>
<dbReference type="PANTHER" id="PTHR47659:SF1">
    <property type="entry name" value="TRANSCRIPTION ACTIVATOR OF GLUCONEOGENESIS ERT1"/>
    <property type="match status" value="1"/>
</dbReference>
<dbReference type="PANTHER" id="PTHR47659">
    <property type="entry name" value="ZN(II)2CYS6 TRANSCRIPTION FACTOR (EUROFUNG)-RELATED"/>
    <property type="match status" value="1"/>
</dbReference>
<dbReference type="Pfam" id="PF24990">
    <property type="entry name" value="PAS_13"/>
    <property type="match status" value="1"/>
</dbReference>
<dbReference type="Pfam" id="PF00172">
    <property type="entry name" value="Zn_clus"/>
    <property type="match status" value="1"/>
</dbReference>
<dbReference type="SMART" id="SM00066">
    <property type="entry name" value="GAL4"/>
    <property type="match status" value="1"/>
</dbReference>
<dbReference type="SMART" id="SM00091">
    <property type="entry name" value="PAS"/>
    <property type="match status" value="1"/>
</dbReference>
<dbReference type="SUPFAM" id="SSF55785">
    <property type="entry name" value="PYP-like sensor domain (PAS domain)"/>
    <property type="match status" value="1"/>
</dbReference>
<dbReference type="SUPFAM" id="SSF57701">
    <property type="entry name" value="Zn2/Cys6 DNA-binding domain"/>
    <property type="match status" value="1"/>
</dbReference>
<dbReference type="PROSITE" id="PS50112">
    <property type="entry name" value="PAS"/>
    <property type="match status" value="1"/>
</dbReference>
<dbReference type="PROSITE" id="PS00463">
    <property type="entry name" value="ZN2_CY6_FUNGAL_1"/>
    <property type="match status" value="1"/>
</dbReference>
<dbReference type="PROSITE" id="PS50048">
    <property type="entry name" value="ZN2_CY6_FUNGAL_2"/>
    <property type="match status" value="1"/>
</dbReference>
<keyword id="KW-0010">Activator</keyword>
<keyword id="KW-0238">DNA-binding</keyword>
<keyword id="KW-0312">Gluconeogenesis</keyword>
<keyword id="KW-0479">Metal-binding</keyword>
<keyword id="KW-0539">Nucleus</keyword>
<keyword id="KW-1185">Reference proteome</keyword>
<keyword id="KW-0804">Transcription</keyword>
<keyword id="KW-0805">Transcription regulation</keyword>
<keyword id="KW-0862">Zinc</keyword>
<organism>
    <name type="scientific">Candida glabrata (strain ATCC 2001 / BCRC 20586 / JCM 3761 / NBRC 0622 / NRRL Y-65 / CBS 138)</name>
    <name type="common">Yeast</name>
    <name type="synonym">Nakaseomyces glabratus</name>
    <dbReference type="NCBI Taxonomy" id="284593"/>
    <lineage>
        <taxon>Eukaryota</taxon>
        <taxon>Fungi</taxon>
        <taxon>Dikarya</taxon>
        <taxon>Ascomycota</taxon>
        <taxon>Saccharomycotina</taxon>
        <taxon>Saccharomycetes</taxon>
        <taxon>Saccharomycetales</taxon>
        <taxon>Saccharomycetaceae</taxon>
        <taxon>Nakaseomyces</taxon>
    </lineage>
</organism>
<sequence length="596" mass="68233">MNNATSYYRTSGEQDGKLTSTLPSGSTSNTNVRYSSNDNSDGTIQSDTSISQTSHTVKKKRKNTNVACVNCSRNHSSCEQKRPCSRCIKKGIANTCVDAPRKKKKYLEGIDTLPIRVGSNTPHYGTPLQIGYHSASFIDNQQYGQTPRHSIGDFNDIYPTSYKSYPENRYNVRNDQAHRFQSYAANSEYSVLSTIVRQNSLNNNNHQIIHRNRDTITSPGPIQSYNSISSELNSPSSSSPKSNGLTRNNSMSPNAKNFDLNSQQHDTYAHKPPQPYPSSKSHIYSILLGDYGKEILQSQVNLYANHFPLVPFLSVDGTLDFKRIYPSDPSKTENTDSFFNTKINQYYVNNEFLTFPELKYKIDSGKVEKVTDTENYAVSVSVECPPPDGSRLYNNVEWDHSLKYGTPVEIYKLINEPFSHTPGFRHLLQYLRKRFSQKDLVSMCQNMAYFRPIFIACSITLTEEDMIFMEQCYQRTLLQYVKFIQEIGTPTVVWRRNGQISYVNDEFEILSGWKREELLDKMSFIVEIIDDESVREYFKTFARIAYNNIKGSEQMDVCRLLTPIRNQVIECKCIWTLKRDMSGLPLMILGNFLPVL</sequence>
<gene>
    <name type="primary">ERT1</name>
    <name type="ordered locus">CAGL0K06985g</name>
</gene>
<reference key="1">
    <citation type="journal article" date="2004" name="Nature">
        <title>Genome evolution in yeasts.</title>
        <authorList>
            <person name="Dujon B."/>
            <person name="Sherman D."/>
            <person name="Fischer G."/>
            <person name="Durrens P."/>
            <person name="Casaregola S."/>
            <person name="Lafontaine I."/>
            <person name="de Montigny J."/>
            <person name="Marck C."/>
            <person name="Neuveglise C."/>
            <person name="Talla E."/>
            <person name="Goffard N."/>
            <person name="Frangeul L."/>
            <person name="Aigle M."/>
            <person name="Anthouard V."/>
            <person name="Babour A."/>
            <person name="Barbe V."/>
            <person name="Barnay S."/>
            <person name="Blanchin S."/>
            <person name="Beckerich J.-M."/>
            <person name="Beyne E."/>
            <person name="Bleykasten C."/>
            <person name="Boisrame A."/>
            <person name="Boyer J."/>
            <person name="Cattolico L."/>
            <person name="Confanioleri F."/>
            <person name="de Daruvar A."/>
            <person name="Despons L."/>
            <person name="Fabre E."/>
            <person name="Fairhead C."/>
            <person name="Ferry-Dumazet H."/>
            <person name="Groppi A."/>
            <person name="Hantraye F."/>
            <person name="Hennequin C."/>
            <person name="Jauniaux N."/>
            <person name="Joyet P."/>
            <person name="Kachouri R."/>
            <person name="Kerrest A."/>
            <person name="Koszul R."/>
            <person name="Lemaire M."/>
            <person name="Lesur I."/>
            <person name="Ma L."/>
            <person name="Muller H."/>
            <person name="Nicaud J.-M."/>
            <person name="Nikolski M."/>
            <person name="Oztas S."/>
            <person name="Ozier-Kalogeropoulos O."/>
            <person name="Pellenz S."/>
            <person name="Potier S."/>
            <person name="Richard G.-F."/>
            <person name="Straub M.-L."/>
            <person name="Suleau A."/>
            <person name="Swennen D."/>
            <person name="Tekaia F."/>
            <person name="Wesolowski-Louvel M."/>
            <person name="Westhof E."/>
            <person name="Wirth B."/>
            <person name="Zeniou-Meyer M."/>
            <person name="Zivanovic Y."/>
            <person name="Bolotin-Fukuhara M."/>
            <person name="Thierry A."/>
            <person name="Bouchier C."/>
            <person name="Caudron B."/>
            <person name="Scarpelli C."/>
            <person name="Gaillardin C."/>
            <person name="Weissenbach J."/>
            <person name="Wincker P."/>
            <person name="Souciet J.-L."/>
        </authorList>
    </citation>
    <scope>NUCLEOTIDE SEQUENCE [LARGE SCALE GENOMIC DNA]</scope>
    <source>
        <strain>ATCC 2001 / BCRC 20586 / JCM 3761 / NBRC 0622 / NRRL Y-65 / CBS 138</strain>
    </source>
</reference>